<keyword id="KW-0963">Cytoplasm</keyword>
<keyword id="KW-1185">Reference proteome</keyword>
<keyword id="KW-0808">Transferase</keyword>
<evidence type="ECO:0000250" key="1"/>
<evidence type="ECO:0000269" key="2">
    <source>
    </source>
</evidence>
<evidence type="ECO:0000305" key="3"/>
<reference key="1">
    <citation type="journal article" date="1999" name="Nature">
        <title>Sequence and analysis of chromosome 2 of the plant Arabidopsis thaliana.</title>
        <authorList>
            <person name="Lin X."/>
            <person name="Kaul S."/>
            <person name="Rounsley S.D."/>
            <person name="Shea T.P."/>
            <person name="Benito M.-I."/>
            <person name="Town C.D."/>
            <person name="Fujii C.Y."/>
            <person name="Mason T.M."/>
            <person name="Bowman C.L."/>
            <person name="Barnstead M.E."/>
            <person name="Feldblyum T.V."/>
            <person name="Buell C.R."/>
            <person name="Ketchum K.A."/>
            <person name="Lee J.J."/>
            <person name="Ronning C.M."/>
            <person name="Koo H.L."/>
            <person name="Moffat K.S."/>
            <person name="Cronin L.A."/>
            <person name="Shen M."/>
            <person name="Pai G."/>
            <person name="Van Aken S."/>
            <person name="Umayam L."/>
            <person name="Tallon L.J."/>
            <person name="Gill J.E."/>
            <person name="Adams M.D."/>
            <person name="Carrera A.J."/>
            <person name="Creasy T.H."/>
            <person name="Goodman H.M."/>
            <person name="Somerville C.R."/>
            <person name="Copenhaver G.P."/>
            <person name="Preuss D."/>
            <person name="Nierman W.C."/>
            <person name="White O."/>
            <person name="Eisen J.A."/>
            <person name="Salzberg S.L."/>
            <person name="Fraser C.M."/>
            <person name="Venter J.C."/>
        </authorList>
    </citation>
    <scope>NUCLEOTIDE SEQUENCE [LARGE SCALE GENOMIC DNA]</scope>
    <source>
        <strain>cv. Columbia</strain>
    </source>
</reference>
<reference key="2">
    <citation type="journal article" date="2017" name="Plant J.">
        <title>Araport11: a complete reannotation of the Arabidopsis thaliana reference genome.</title>
        <authorList>
            <person name="Cheng C.Y."/>
            <person name="Krishnakumar V."/>
            <person name="Chan A.P."/>
            <person name="Thibaud-Nissen F."/>
            <person name="Schobel S."/>
            <person name="Town C.D."/>
        </authorList>
    </citation>
    <scope>GENOME REANNOTATION</scope>
    <source>
        <strain>cv. Columbia</strain>
    </source>
</reference>
<reference key="3">
    <citation type="journal article" date="2004" name="J. Exp. Bot.">
        <title>The multi-protein family of Arabidopsis sulphotransferases and their relatives in other plant species.</title>
        <authorList>
            <person name="Klein M."/>
            <person name="Papenbrock J."/>
        </authorList>
    </citation>
    <scope>GENE FAMILY</scope>
    <scope>NOMENCLATURE</scope>
</reference>
<reference key="4">
    <citation type="journal article" date="2010" name="Plant Cell Environ.">
        <title>A stress-inducible sulphotransferase sulphonates salicylic acid and confers pathogen resistance in Arabidopsis.</title>
        <authorList>
            <person name="Baek D."/>
            <person name="Pathange P."/>
            <person name="Chung J.S."/>
            <person name="Jiang J."/>
            <person name="Gao L."/>
            <person name="Oikawa A."/>
            <person name="Hirai M.Y."/>
            <person name="Saito K."/>
            <person name="Pare P.W."/>
            <person name="Shi H."/>
        </authorList>
    </citation>
    <scope>DISRUPTION PHENOTYPE</scope>
</reference>
<gene>
    <name type="primary">SOT13</name>
    <name type="ordered locus">At2g03770</name>
    <name type="ORF">F19B11</name>
</gene>
<protein>
    <recommendedName>
        <fullName>Cytosolic sulfotransferase 13</fullName>
        <shortName>AtSOT13</shortName>
        <ecNumber>2.8.2.-</ecNumber>
    </recommendedName>
</protein>
<comment type="function">
    <text evidence="1">Sulfotransferase that utilizes 3'-phospho-5'-adenylyl sulfate (PAPS) as sulfonate donor.</text>
</comment>
<comment type="subcellular location">
    <subcellularLocation>
        <location evidence="1">Cytoplasm</location>
    </subcellularLocation>
</comment>
<comment type="disruption phenotype">
    <text evidence="2">No effect on sensitivity to salicylic acid.</text>
</comment>
<comment type="similarity">
    <text evidence="3">Belongs to the sulfotransferase 1 family.</text>
</comment>
<feature type="chain" id="PRO_0000417060" description="Cytosolic sulfotransferase 13">
    <location>
        <begin position="1"/>
        <end position="324"/>
    </location>
</feature>
<feature type="active site" description="Proton acceptor" evidence="1">
    <location>
        <position position="134"/>
    </location>
</feature>
<feature type="binding site" evidence="1">
    <location>
        <begin position="76"/>
        <end position="81"/>
    </location>
    <ligand>
        <name>3'-phosphoadenylyl sulfate</name>
        <dbReference type="ChEBI" id="CHEBI:58339"/>
    </ligand>
</feature>
<feature type="binding site" evidence="1">
    <location>
        <position position="156"/>
    </location>
    <ligand>
        <name>3'-phosphoadenylyl sulfate</name>
        <dbReference type="ChEBI" id="CHEBI:58339"/>
    </ligand>
</feature>
<feature type="binding site" evidence="1">
    <location>
        <position position="164"/>
    </location>
    <ligand>
        <name>3'-phosphoadenylyl sulfate</name>
        <dbReference type="ChEBI" id="CHEBI:58339"/>
    </ligand>
</feature>
<feature type="binding site" evidence="1">
    <location>
        <position position="222"/>
    </location>
    <ligand>
        <name>3'-phosphoadenylyl sulfate</name>
        <dbReference type="ChEBI" id="CHEBI:58339"/>
    </ligand>
</feature>
<feature type="binding site" evidence="1">
    <location>
        <begin position="288"/>
        <end position="290"/>
    </location>
    <ligand>
        <name>3'-phosphoadenylyl sulfate</name>
        <dbReference type="ChEBI" id="CHEBI:58339"/>
    </ligand>
</feature>
<sequence length="324" mass="37717">MTKSETTLSKLLVESELVQECEELLSSLPRDRSVFAEYLYQYQGFWYPPNLLEGVLYSQKHFQARDSDIVLASIPKSGTTWLKSLVFALIHRQEFQTPLVSHPLLDNNPHTLVTFIEGFHLHTQDTSPRIFSTHIPVGSLPESVKDSSCKVVYCCRNPKDAFVSLWHFMKNLIVKEMVGCTMEEMVRFFCRGSSIYGPFWDHVLQYWKESRENPKKVMFVMYEEMREQPQEWVMRIAEFLGYSFTEEEIENGVLEDIIKLCSLENLSKLEVNEKGKLLNGMETKAFFRKGEIGGWRDTLTPLLAEEIDKTTKEKLIGSDFRFFC</sequence>
<accession>Q9ZPQ5</accession>
<organism>
    <name type="scientific">Arabidopsis thaliana</name>
    <name type="common">Mouse-ear cress</name>
    <dbReference type="NCBI Taxonomy" id="3702"/>
    <lineage>
        <taxon>Eukaryota</taxon>
        <taxon>Viridiplantae</taxon>
        <taxon>Streptophyta</taxon>
        <taxon>Embryophyta</taxon>
        <taxon>Tracheophyta</taxon>
        <taxon>Spermatophyta</taxon>
        <taxon>Magnoliopsida</taxon>
        <taxon>eudicotyledons</taxon>
        <taxon>Gunneridae</taxon>
        <taxon>Pentapetalae</taxon>
        <taxon>rosids</taxon>
        <taxon>malvids</taxon>
        <taxon>Brassicales</taxon>
        <taxon>Brassicaceae</taxon>
        <taxon>Camelineae</taxon>
        <taxon>Arabidopsis</taxon>
    </lineage>
</organism>
<proteinExistence type="inferred from homology"/>
<name>SOT13_ARATH</name>
<dbReference type="EC" id="2.8.2.-"/>
<dbReference type="EMBL" id="AC006836">
    <property type="protein sequence ID" value="AAD20079.1"/>
    <property type="molecule type" value="Genomic_DNA"/>
</dbReference>
<dbReference type="EMBL" id="CP002685">
    <property type="protein sequence ID" value="AEC05747.1"/>
    <property type="molecule type" value="Genomic_DNA"/>
</dbReference>
<dbReference type="PIR" id="B84452">
    <property type="entry name" value="B84452"/>
</dbReference>
<dbReference type="RefSeq" id="NP_178472.1">
    <property type="nucleotide sequence ID" value="NM_126424.2"/>
</dbReference>
<dbReference type="SMR" id="Q9ZPQ5"/>
<dbReference type="FunCoup" id="Q9ZPQ5">
    <property type="interactions" value="37"/>
</dbReference>
<dbReference type="STRING" id="3702.Q9ZPQ5"/>
<dbReference type="PaxDb" id="3702-AT2G03770.1"/>
<dbReference type="ProteomicsDB" id="245326"/>
<dbReference type="DNASU" id="814904"/>
<dbReference type="EnsemblPlants" id="AT2G03770.1">
    <property type="protein sequence ID" value="AT2G03770.1"/>
    <property type="gene ID" value="AT2G03770"/>
</dbReference>
<dbReference type="GeneID" id="814904"/>
<dbReference type="Gramene" id="AT2G03770.1">
    <property type="protein sequence ID" value="AT2G03770.1"/>
    <property type="gene ID" value="AT2G03770"/>
</dbReference>
<dbReference type="KEGG" id="ath:AT2G03770"/>
<dbReference type="Araport" id="AT2G03770"/>
<dbReference type="TAIR" id="AT2G03770">
    <property type="gene designation" value="SULT202E1"/>
</dbReference>
<dbReference type="eggNOG" id="KOG1584">
    <property type="taxonomic scope" value="Eukaryota"/>
</dbReference>
<dbReference type="HOGENOM" id="CLU_027239_0_1_1"/>
<dbReference type="InParanoid" id="Q9ZPQ5"/>
<dbReference type="OMA" id="KEMVGCT"/>
<dbReference type="OrthoDB" id="205623at2759"/>
<dbReference type="PhylomeDB" id="Q9ZPQ5"/>
<dbReference type="BioCyc" id="ARA:AT2G03770-MONOMER"/>
<dbReference type="PRO" id="PR:Q9ZPQ5"/>
<dbReference type="Proteomes" id="UP000006548">
    <property type="component" value="Chromosome 2"/>
</dbReference>
<dbReference type="ExpressionAtlas" id="Q9ZPQ5">
    <property type="expression patterns" value="baseline and differential"/>
</dbReference>
<dbReference type="GO" id="GO:0005737">
    <property type="term" value="C:cytoplasm"/>
    <property type="evidence" value="ECO:0007669"/>
    <property type="project" value="UniProtKB-SubCell"/>
</dbReference>
<dbReference type="GO" id="GO:1990135">
    <property type="term" value="F:flavonoid sulfotransferase activity"/>
    <property type="evidence" value="ECO:0000314"/>
    <property type="project" value="TAIR"/>
</dbReference>
<dbReference type="GO" id="GO:0008146">
    <property type="term" value="F:sulfotransferase activity"/>
    <property type="evidence" value="ECO:0000314"/>
    <property type="project" value="TAIR"/>
</dbReference>
<dbReference type="GO" id="GO:0009812">
    <property type="term" value="P:flavonoid metabolic process"/>
    <property type="evidence" value="ECO:0000314"/>
    <property type="project" value="TAIR"/>
</dbReference>
<dbReference type="FunFam" id="3.40.50.300:FF:001258">
    <property type="entry name" value="Sulfotransferase"/>
    <property type="match status" value="1"/>
</dbReference>
<dbReference type="Gene3D" id="3.40.50.300">
    <property type="entry name" value="P-loop containing nucleotide triphosphate hydrolases"/>
    <property type="match status" value="1"/>
</dbReference>
<dbReference type="InterPro" id="IPR027417">
    <property type="entry name" value="P-loop_NTPase"/>
</dbReference>
<dbReference type="InterPro" id="IPR000863">
    <property type="entry name" value="Sulfotransferase_dom"/>
</dbReference>
<dbReference type="PANTHER" id="PTHR11783">
    <property type="entry name" value="SULFOTRANSFERASE SULT"/>
    <property type="match status" value="1"/>
</dbReference>
<dbReference type="Pfam" id="PF00685">
    <property type="entry name" value="Sulfotransfer_1"/>
    <property type="match status" value="1"/>
</dbReference>
<dbReference type="SUPFAM" id="SSF52540">
    <property type="entry name" value="P-loop containing nucleoside triphosphate hydrolases"/>
    <property type="match status" value="1"/>
</dbReference>